<keyword id="KW-0002">3D-structure</keyword>
<keyword id="KW-0997">Cell inner membrane</keyword>
<keyword id="KW-1003">Cell membrane</keyword>
<keyword id="KW-0472">Membrane</keyword>
<keyword id="KW-0653">Protein transport</keyword>
<keyword id="KW-1185">Reference proteome</keyword>
<keyword id="KW-0812">Transmembrane</keyword>
<keyword id="KW-1133">Transmembrane helix</keyword>
<keyword id="KW-0813">Transport</keyword>
<keyword id="KW-0843">Virulence</keyword>
<evidence type="ECO:0000255" key="1"/>
<evidence type="ECO:0000269" key="2">
    <source>
    </source>
</evidence>
<evidence type="ECO:0000269" key="3">
    <source>
    </source>
</evidence>
<evidence type="ECO:0000269" key="4">
    <source>
    </source>
</evidence>
<evidence type="ECO:0000269" key="5">
    <source>
    </source>
</evidence>
<evidence type="ECO:0000269" key="6">
    <source>
    </source>
</evidence>
<evidence type="ECO:0000269" key="7">
    <source>
    </source>
</evidence>
<evidence type="ECO:0000269" key="8">
    <source>
    </source>
</evidence>
<evidence type="ECO:0000303" key="9">
    <source>
    </source>
</evidence>
<evidence type="ECO:0000303" key="10">
    <source>
    </source>
</evidence>
<evidence type="ECO:0000303" key="11">
    <source>
    </source>
</evidence>
<evidence type="ECO:0000305" key="12">
    <source>
    </source>
</evidence>
<evidence type="ECO:0000312" key="13">
    <source>
        <dbReference type="EMBL" id="AAU26543.1"/>
    </source>
</evidence>
<evidence type="ECO:0007744" key="14">
    <source>
        <dbReference type="PDB" id="5X1E"/>
    </source>
</evidence>
<evidence type="ECO:0007744" key="15">
    <source>
        <dbReference type="PDB" id="5X42"/>
    </source>
</evidence>
<evidence type="ECO:0007744" key="16">
    <source>
        <dbReference type="PDB" id="5X90"/>
    </source>
</evidence>
<evidence type="ECO:0007744" key="17">
    <source>
        <dbReference type="PDB" id="5XNB"/>
    </source>
</evidence>
<evidence type="ECO:0007744" key="18">
    <source>
        <dbReference type="PDB" id="6SZ9"/>
    </source>
</evidence>
<evidence type="ECO:0007744" key="19">
    <source>
        <dbReference type="PDB" id="7BWK"/>
    </source>
</evidence>
<evidence type="ECO:0007829" key="20">
    <source>
        <dbReference type="PDB" id="5X1E"/>
    </source>
</evidence>
<evidence type="ECO:0007829" key="21">
    <source>
        <dbReference type="PDB" id="5X42"/>
    </source>
</evidence>
<evidence type="ECO:0007829" key="22">
    <source>
        <dbReference type="PDB" id="5X90"/>
    </source>
</evidence>
<evidence type="ECO:0007829" key="23">
    <source>
        <dbReference type="PDB" id="5XNB"/>
    </source>
</evidence>
<protein>
    <recommendedName>
        <fullName evidence="10">Type 4 coupling protein DotL</fullName>
        <shortName evidence="11">T4CP</shortName>
    </recommendedName>
</protein>
<comment type="function">
    <text evidence="2 3 4 8 12">Component of the Dot/Icm type IVB secretion system (T4BSS), which is used to inject bacterial effector proteins into eukaryotic host cells (PubMed:17040490, PubMed:22694730, PubMed:32513920). Part of a subcomplex which recruits effector proteins and delivers them to the core transmembrane subcomplex (PubMed:23028312, PubMed:32513920). Plays a central role in the assembly of the subcomplex (PubMed:32513920). Required for the recruitment of IcmS and IcmW to the inner membrane and for the translocation of adapter-dependent substrates (PubMed:23028312). May have ATPase activity (Probable).</text>
</comment>
<comment type="subunit">
    <text evidence="2 3 4 5 6 7 8">The T4BSS is a complex nanomachine composed of several subcomplexes. This subunit is part of the Type IV Coupling Complex (T4CC), a subcomplex composed of the DotLMNYZ core and the IcmSW-LvgA adapter subunits, linked by the C-terminal tail of DotL (PubMed:17040490, PubMed:22694730, PubMed:23028312, PubMed:28714967, PubMed:32457311, PubMed:32513920). Six DotLMNYZ hetero-pentameric units may assemble into a hexameric nanomachine, forming an inner membrane channel for effectors to pass through (PubMed:32513920). Interacts directly with DotM (PubMed:22694730, PubMed:32513920). Interacts directly, via its C-terminal region, with the type IV adapter proteins IcmS and IcmW (PubMed:23028312, PubMed:28714967, PubMed:29203674, PubMed:32513920). Also interacts with DotN and LvgA via its C-terminal region (PubMed:28714967, PubMed:32513920).</text>
</comment>
<comment type="subcellular location">
    <subcellularLocation>
        <location evidence="2 3">Cell inner membrane</location>
        <topology evidence="1">Single-pass membrane protein</topology>
    </subcellularLocation>
    <text evidence="3">Localizes to the poles of the cell.</text>
</comment>
<proteinExistence type="evidence at protein level"/>
<dbReference type="EMBL" id="AE017354">
    <property type="protein sequence ID" value="AAU26543.1"/>
    <property type="molecule type" value="Genomic_DNA"/>
</dbReference>
<dbReference type="RefSeq" id="WP_010946195.1">
    <property type="nucleotide sequence ID" value="NC_002942.5"/>
</dbReference>
<dbReference type="RefSeq" id="YP_094490.1">
    <property type="nucleotide sequence ID" value="NC_002942.5"/>
</dbReference>
<dbReference type="PDB" id="5X1E">
    <property type="method" value="X-ray"/>
    <property type="resolution" value="2.00 A"/>
    <property type="chains" value="C=672-773, F=674-773"/>
</dbReference>
<dbReference type="PDB" id="5X42">
    <property type="method" value="X-ray"/>
    <property type="resolution" value="1.80 A"/>
    <property type="chains" value="B/D=590-659"/>
</dbReference>
<dbReference type="PDB" id="5X90">
    <property type="method" value="X-ray"/>
    <property type="resolution" value="2.80 A"/>
    <property type="chains" value="C=672-778, G=672-779"/>
</dbReference>
<dbReference type="PDB" id="5XNB">
    <property type="method" value="X-ray"/>
    <property type="resolution" value="2.59 A"/>
    <property type="chains" value="A/D/G/J/M/P=661-773"/>
</dbReference>
<dbReference type="PDB" id="6SZ9">
    <property type="method" value="EM"/>
    <property type="resolution" value="3.70 A"/>
    <property type="chains" value="A=1-783"/>
</dbReference>
<dbReference type="PDB" id="7BWK">
    <property type="method" value="X-ray"/>
    <property type="resolution" value="2.80 A"/>
    <property type="chains" value="A/F=656-783"/>
</dbReference>
<dbReference type="PDB" id="7OVB">
    <property type="method" value="EM"/>
    <property type="resolution" value="3.61 A"/>
    <property type="chains" value="A=1-783"/>
</dbReference>
<dbReference type="PDBsum" id="5X1E"/>
<dbReference type="PDBsum" id="5X42"/>
<dbReference type="PDBsum" id="5X90"/>
<dbReference type="PDBsum" id="5XNB"/>
<dbReference type="PDBsum" id="6SZ9"/>
<dbReference type="PDBsum" id="7BWK"/>
<dbReference type="PDBsum" id="7OVB"/>
<dbReference type="EMDB" id="EMD-10350"/>
<dbReference type="EMDB" id="EMD-13083"/>
<dbReference type="SMR" id="Q5ZYC6"/>
<dbReference type="STRING" id="272624.lpg0446"/>
<dbReference type="TCDB" id="3.A.7.9.1">
    <property type="family name" value="the type iv (conjugal dna-protein transfer or virb) secretory pathway (ivsp) family"/>
</dbReference>
<dbReference type="PaxDb" id="272624-lpg0446"/>
<dbReference type="GeneID" id="57034448"/>
<dbReference type="KEGG" id="lpn:lpg0446"/>
<dbReference type="PATRIC" id="fig|272624.6.peg.462"/>
<dbReference type="eggNOG" id="COG3505">
    <property type="taxonomic scope" value="Bacteria"/>
</dbReference>
<dbReference type="HOGENOM" id="CLU_016768_1_0_6"/>
<dbReference type="OrthoDB" id="7817736at2"/>
<dbReference type="Proteomes" id="UP000000609">
    <property type="component" value="Chromosome"/>
</dbReference>
<dbReference type="GO" id="GO:0005886">
    <property type="term" value="C:plasma membrane"/>
    <property type="evidence" value="ECO:0007669"/>
    <property type="project" value="UniProtKB-SubCell"/>
</dbReference>
<dbReference type="GO" id="GO:0015031">
    <property type="term" value="P:protein transport"/>
    <property type="evidence" value="ECO:0007669"/>
    <property type="project" value="UniProtKB-KW"/>
</dbReference>
<dbReference type="CDD" id="cd01127">
    <property type="entry name" value="TrwB_TraG_TraD_VirD4"/>
    <property type="match status" value="1"/>
</dbReference>
<dbReference type="Gene3D" id="3.40.50.300">
    <property type="entry name" value="P-loop containing nucleotide triphosphate hydrolases"/>
    <property type="match status" value="2"/>
</dbReference>
<dbReference type="InterPro" id="IPR027417">
    <property type="entry name" value="P-loop_NTPase"/>
</dbReference>
<dbReference type="InterPro" id="IPR051162">
    <property type="entry name" value="T4SS_component"/>
</dbReference>
<dbReference type="InterPro" id="IPR032689">
    <property type="entry name" value="TraG-D_C"/>
</dbReference>
<dbReference type="PANTHER" id="PTHR30121:SF6">
    <property type="entry name" value="SLR6007 PROTEIN"/>
    <property type="match status" value="1"/>
</dbReference>
<dbReference type="PANTHER" id="PTHR30121">
    <property type="entry name" value="UNCHARACTERIZED PROTEIN YJGR-RELATED"/>
    <property type="match status" value="1"/>
</dbReference>
<dbReference type="Pfam" id="PF12696">
    <property type="entry name" value="TraG-D_C"/>
    <property type="match status" value="1"/>
</dbReference>
<dbReference type="SUPFAM" id="SSF52540">
    <property type="entry name" value="P-loop containing nucleoside triphosphate hydrolases"/>
    <property type="match status" value="1"/>
</dbReference>
<feature type="chain" id="PRO_0000455590" description="Type 4 coupling protein DotL">
    <location>
        <begin position="1"/>
        <end position="783"/>
    </location>
</feature>
<feature type="transmembrane region" description="Helical" evidence="1">
    <location>
        <begin position="47"/>
        <end position="67"/>
    </location>
</feature>
<feature type="region of interest" description="ATPase domain" evidence="12">
    <location>
        <begin position="100"/>
        <end position="500"/>
    </location>
</feature>
<feature type="region of interest" description="Interaction with IcmS/IcmW" evidence="11">
    <location>
        <begin position="671"/>
        <end position="773"/>
    </location>
</feature>
<feature type="mutagenesis site" description="Shows intracellular growth defects. Can still recruit type IV adapter proteins IcmS/IcmW to the inner membrane." evidence="4">
    <original>Q</original>
    <variation>R</variation>
    <location>
        <position position="222"/>
    </location>
</feature>
<feature type="mutagenesis site" description="Abolishes intracellular growth in A.castellanii." evidence="8">
    <original>AEVD</original>
    <variation>RRVR</variation>
    <location>
        <begin position="363"/>
        <end position="366"/>
    </location>
</feature>
<feature type="mutagenesis site" description="Shows intracellular growth defects. Does not interact with type IV adapter proteins IcmS/IcmW and is unable to recruit them to the inner membrane. Can still export the IcmSW-independent effectors, but exhibits a specific defect in secretion of IcmSW-dependent substrates." evidence="4">
    <location>
        <begin position="726"/>
        <end position="783"/>
    </location>
</feature>
<feature type="helix" evidence="21">
    <location>
        <begin position="597"/>
        <end position="613"/>
    </location>
</feature>
<feature type="helix" evidence="21">
    <location>
        <begin position="626"/>
        <end position="637"/>
    </location>
</feature>
<feature type="helix" evidence="21">
    <location>
        <begin position="643"/>
        <end position="656"/>
    </location>
</feature>
<feature type="strand" evidence="23">
    <location>
        <begin position="692"/>
        <end position="694"/>
    </location>
</feature>
<feature type="helix" evidence="20">
    <location>
        <begin position="695"/>
        <end position="699"/>
    </location>
</feature>
<feature type="helix" evidence="20">
    <location>
        <begin position="705"/>
        <end position="718"/>
    </location>
</feature>
<feature type="helix" evidence="20">
    <location>
        <begin position="723"/>
        <end position="740"/>
    </location>
</feature>
<feature type="helix" evidence="20">
    <location>
        <begin position="753"/>
        <end position="772"/>
    </location>
</feature>
<feature type="turn" evidence="22">
    <location>
        <begin position="774"/>
        <end position="777"/>
    </location>
</feature>
<reference key="1">
    <citation type="journal article" date="2004" name="Science">
        <title>The genomic sequence of the accidental pathogen Legionella pneumophila.</title>
        <authorList>
            <person name="Chien M."/>
            <person name="Morozova I."/>
            <person name="Shi S."/>
            <person name="Sheng H."/>
            <person name="Chen J."/>
            <person name="Gomez S.M."/>
            <person name="Asamani G."/>
            <person name="Hill K."/>
            <person name="Nuara J."/>
            <person name="Feder M."/>
            <person name="Rineer J."/>
            <person name="Greenberg J.J."/>
            <person name="Steshenko V."/>
            <person name="Park S.H."/>
            <person name="Zhao B."/>
            <person name="Teplitskaya E."/>
            <person name="Edwards J.R."/>
            <person name="Pampou S."/>
            <person name="Georghiou A."/>
            <person name="Chou I.-C."/>
            <person name="Iannuccilli W."/>
            <person name="Ulz M.E."/>
            <person name="Kim D.H."/>
            <person name="Geringer-Sameth A."/>
            <person name="Goldsberry C."/>
            <person name="Morozov P."/>
            <person name="Fischer S.G."/>
            <person name="Segal G."/>
            <person name="Qu X."/>
            <person name="Rzhetsky A."/>
            <person name="Zhang P."/>
            <person name="Cayanis E."/>
            <person name="De Jong P.J."/>
            <person name="Ju J."/>
            <person name="Kalachikov S."/>
            <person name="Shuman H.A."/>
            <person name="Russo J.J."/>
        </authorList>
    </citation>
    <scope>NUCLEOTIDE SEQUENCE [LARGE SCALE GENOMIC DNA]</scope>
    <source>
        <strain>Philadelphia 1 / ATCC 33152 / DSM 7513</strain>
    </source>
</reference>
<reference key="2">
    <citation type="journal article" date="2006" name="Mol. Microbiol.">
        <title>Identification of the core transmembrane complex of the Legionella Dot/Icm type IV secretion system.</title>
        <authorList>
            <person name="Vincent C.D."/>
            <person name="Friedman J.R."/>
            <person name="Jeong K.C."/>
            <person name="Buford E.C."/>
            <person name="Miller J.L."/>
            <person name="Vogel J.P."/>
        </authorList>
    </citation>
    <scope>FUNCTION</scope>
    <scope>SUBUNIT</scope>
    <scope>SUBCELLULAR LOCATION</scope>
    <source>
        <strain>Philadelphia 1 / Lp02</strain>
    </source>
</reference>
<reference key="3">
    <citation type="journal article" date="2012" name="Mol. Microbiol.">
        <title>Identification of the DotL coupling protein subcomplex of the Legionella Dot/Icm type IV secretion system.</title>
        <authorList>
            <person name="Vincent C.D."/>
            <person name="Friedman J.R."/>
            <person name="Jeong K.C."/>
            <person name="Sutherland M.C."/>
            <person name="Vogel J.P."/>
        </authorList>
    </citation>
    <scope>FUNCTION</scope>
    <scope>SUBUNIT</scope>
    <scope>SUBCELLULAR LOCATION</scope>
    <source>
        <strain>Philadelphia 1 / Lp02</strain>
    </source>
</reference>
<reference key="4">
    <citation type="journal article" date="2012" name="PLoS Pathog.">
        <title>The Legionella IcmSW complex directly interacts with DotL to mediate translocation of adaptor-dependent substrates.</title>
        <authorList>
            <person name="Sutherland M.C."/>
            <person name="Nguyen T.L."/>
            <person name="Tseng V."/>
            <person name="Vogel J.P."/>
        </authorList>
    </citation>
    <scope>FUNCTION</scope>
    <scope>SUBUNIT</scope>
    <scope>INTERACTION WITH ICMS AND ICMW</scope>
    <scope>MUTAGENESIS OF GLN-222 AND 726-ALA--THR-783</scope>
    <source>
        <strain>Philadelphia 1 / Lp02</strain>
    </source>
</reference>
<reference evidence="14 15 16" key="5">
    <citation type="journal article" date="2017" name="Nat. Microbiol.">
        <title>Architecture of the type IV coupling protein complex of Legionella pneumophila.</title>
        <authorList>
            <person name="Kwak M.J."/>
            <person name="Kim J.D."/>
            <person name="Kim H."/>
            <person name="Kim C."/>
            <person name="Bowman J.W."/>
            <person name="Kim S."/>
            <person name="Joo K."/>
            <person name="Lee J."/>
            <person name="Jin K.S."/>
            <person name="Kim Y.G."/>
            <person name="Lee N.K."/>
            <person name="Jung J.U."/>
            <person name="Oh B.H."/>
        </authorList>
    </citation>
    <scope>X-RAY CRYSTALLOGRAPHY (1.80 ANGSTROMS) OF 590-659 IN COMPLEXES WITH DOTN; ICMS; ICMW AND LVGA</scope>
    <scope>SUBUNIT</scope>
    <scope>INTERACTION WITH DOTN; ICMS; ICMW AND LVGA</scope>
    <source>
        <strain>Philadelphia 1 / ATCC 33152 / DSM 7513</strain>
    </source>
</reference>
<reference evidence="17" key="6">
    <citation type="journal article" date="2017" name="Proc. Natl. Acad. Sci. U.S.A.">
        <title>Structural insights into the roles of the IcmS-IcmW complex in the type IVb secretion system of Legionella pneumophila.</title>
        <authorList>
            <person name="Xu J."/>
            <person name="Xu D."/>
            <person name="Wan M."/>
            <person name="Yin L."/>
            <person name="Wang X."/>
            <person name="Wu L."/>
            <person name="Liu Y."/>
            <person name="Liu X."/>
            <person name="Zhou Y."/>
            <person name="Zhu Y."/>
        </authorList>
    </citation>
    <scope>X-RAY CRYSTALLOGRAPHY (2.59 ANGSTROMS) OF 661-773 IN COMPLEX WITH ICMS AND ICMW</scope>
    <scope>SUBUNIT</scope>
</reference>
<reference evidence="19" key="7">
    <citation type="journal article" date="2020" name="Nat. Commun.">
        <title>Structural basis for effector protein recognition by the Dot/Icm Type IVB coupling protein complex.</title>
        <authorList>
            <person name="Kim H."/>
            <person name="Kubori T."/>
            <person name="Yamazaki K."/>
            <person name="Kwak M.J."/>
            <person name="Park S.Y."/>
            <person name="Nagai H."/>
            <person name="Vogel J.P."/>
            <person name="Oh B.H."/>
        </authorList>
    </citation>
    <scope>X-RAY CRYSTALLOGRAPHY (2.80 ANGSTROMS) OF 656-783 IN COMPLEX WITH ICMS; ICMW; LVGA AND VPDB</scope>
    <scope>SUBUNIT</scope>
</reference>
<reference evidence="18" key="8">
    <citation type="journal article" date="2020" name="Nat. Commun.">
        <title>Mechanism of effector capture and delivery by the type IV secretion system from Legionella pneumophila.</title>
        <authorList>
            <person name="Meir A."/>
            <person name="Mace K."/>
            <person name="Lukoyanova N."/>
            <person name="Chetrit D."/>
            <person name="Hospenthal M.K."/>
            <person name="Redzej A."/>
            <person name="Roy C."/>
            <person name="Waksman G."/>
        </authorList>
    </citation>
    <scope>STRUCTURE BY ELECTRON MICROSCOPY (3.70 ANGSTROMS)</scope>
    <scope>FUNCTION</scope>
    <scope>SUBUNIT</scope>
    <scope>MUTAGENESIS OF 363-ALA--ASP-366</scope>
    <source>
        <strain>Philadelphia 1 / Lp01</strain>
    </source>
</reference>
<organism>
    <name type="scientific">Legionella pneumophila subsp. pneumophila (strain Philadelphia 1 / ATCC 33152 / DSM 7513)</name>
    <dbReference type="NCBI Taxonomy" id="272624"/>
    <lineage>
        <taxon>Bacteria</taxon>
        <taxon>Pseudomonadati</taxon>
        <taxon>Pseudomonadota</taxon>
        <taxon>Gammaproteobacteria</taxon>
        <taxon>Legionellales</taxon>
        <taxon>Legionellaceae</taxon>
        <taxon>Legionella</taxon>
    </lineage>
</organism>
<accession>Q5ZYC6</accession>
<gene>
    <name evidence="9" type="primary">dotL</name>
    <name evidence="13" type="synonym">icmO</name>
    <name evidence="13" type="ordered locus">lpg0446</name>
</gene>
<name>DOTL_LEGPH</name>
<sequence>MMRGIDSRHELDPTLLLRDTRTFTQRLADFFADPTNISIVLISLAAVSYYFSEAATFLLIMGGIFFLYSYTRKQKLPFRLPQISRAKDYNDLKPGINKPNIARGITFFGNDRKTGEELWFANDDMRTHALIFGSTGSGKTETLVSLSYNALVQGSGFIYVDGKGDNSLYAKVFSMVRSMGREDDLLLINFMTGARDIVGPQEKRLSNTLNPFCQGSSSMLTQLVVSLMGSSGQSSDGDMWKGRAIAFVEALMRLLVYMRDEGAILLDANTIRNYFDLQRLESIVIDKVFPRDDQESVNIETIPKLVTDPLRNYLNTLPGYNKEKKGKQVSQVLEQHGFITMQLVRSFSSLADTYGHIIRTNLAEVDFKDVVLNRRILVVLLPALEKSPDELSNLGKIIVSSLKAMMAAGLGEEVEGDYRDVILRKPTNAPTPYMCILDEYGYYAVQGFAVVPAQARSLGFSAIFAGQDLPAFQKASKEEAASIGANTNIKICMKLEDPTETWDFFTKTAGEAYVTKVDSFQTKETSIANSYMDTKSSSFEKRARVDLLDLKEQTEGEAHIFFKSKIVRARMFYANPKPVKQLKINQFLKVEPPPDDYLMKLQKQLASFQSILESGDLSINKAVENEEITLISKALKESTIVEPIERGVAALIAFHGQNEPEPVEDIVEEEVEGALTIFSKLRIDPNAPPILVADKEVFSEPLLPINETRNQMITIERLAGAKDKYAGTVANELIKDFQIATSYPPEERDVIDVQELTGIIRDLSAKISAEREKANKKAAEELT</sequence>